<organism>
    <name type="scientific">Homo sapiens</name>
    <name type="common">Human</name>
    <dbReference type="NCBI Taxonomy" id="9606"/>
    <lineage>
        <taxon>Eukaryota</taxon>
        <taxon>Metazoa</taxon>
        <taxon>Chordata</taxon>
        <taxon>Craniata</taxon>
        <taxon>Vertebrata</taxon>
        <taxon>Euteleostomi</taxon>
        <taxon>Mammalia</taxon>
        <taxon>Eutheria</taxon>
        <taxon>Euarchontoglires</taxon>
        <taxon>Primates</taxon>
        <taxon>Haplorrhini</taxon>
        <taxon>Catarrhini</taxon>
        <taxon>Hominidae</taxon>
        <taxon>Homo</taxon>
    </lineage>
</organism>
<sequence>MEEPPVREEEEEEGEEDEERDEVGPEGALGKSPFQLTAEDVYDISYLLGRELMALGSDPRVTQLQFKVVRVLEMLEALVNEGSLALEELKMERDHLRKEVEGLRRQSPPASGEVNLGPNKMVVDLTDPNRPRFTLQELRDVLQERNKLKSQLLVVQEELQCYKSGLIPPREGPGGRREKDAVVTSAKNAGRNKEEKTIIKKLFFFRSGKQT</sequence>
<dbReference type="EMBL" id="AB085763">
    <property type="protein sequence ID" value="BAC76826.1"/>
    <property type="molecule type" value="mRNA"/>
</dbReference>
<dbReference type="EMBL" id="AK056934">
    <property type="protein sequence ID" value="BAB71313.1"/>
    <property type="molecule type" value="mRNA"/>
</dbReference>
<dbReference type="EMBL" id="CH471054">
    <property type="protein sequence ID" value="EAW98411.1"/>
    <property type="molecule type" value="Genomic_DNA"/>
</dbReference>
<dbReference type="EMBL" id="BC013042">
    <property type="protein sequence ID" value="AAH13042.1"/>
    <property type="molecule type" value="mRNA"/>
</dbReference>
<dbReference type="CCDS" id="CCDS9248.1"/>
<dbReference type="RefSeq" id="NP_659495.1">
    <property type="nucleotide sequence ID" value="NM_145058.3"/>
</dbReference>
<dbReference type="PDB" id="6RIR">
    <property type="method" value="X-ray"/>
    <property type="resolution" value="1.77 A"/>
    <property type="chains" value="C/D=129-165"/>
</dbReference>
<dbReference type="PDB" id="6SQ2">
    <property type="method" value="X-ray"/>
    <property type="resolution" value="1.68 A"/>
    <property type="chains" value="D/E=129-165"/>
</dbReference>
<dbReference type="PDB" id="7LWB">
    <property type="method" value="X-ray"/>
    <property type="resolution" value="1.90 A"/>
    <property type="chains" value="D=117-165"/>
</dbReference>
<dbReference type="PDBsum" id="6RIR"/>
<dbReference type="PDBsum" id="6SQ2"/>
<dbReference type="PDBsum" id="7LWB"/>
<dbReference type="SMR" id="Q969X0"/>
<dbReference type="BioGRID" id="128200">
    <property type="interactions" value="9"/>
</dbReference>
<dbReference type="FunCoup" id="Q969X0">
    <property type="interactions" value="243"/>
</dbReference>
<dbReference type="IntAct" id="Q969X0">
    <property type="interactions" value="13"/>
</dbReference>
<dbReference type="STRING" id="9606.ENSP00000280571"/>
<dbReference type="iPTMnet" id="Q969X0"/>
<dbReference type="PhosphoSitePlus" id="Q969X0"/>
<dbReference type="BioMuta" id="RILPL2"/>
<dbReference type="DMDM" id="74731067"/>
<dbReference type="jPOST" id="Q969X0"/>
<dbReference type="MassIVE" id="Q969X0"/>
<dbReference type="PaxDb" id="9606-ENSP00000280571"/>
<dbReference type="PeptideAtlas" id="Q969X0"/>
<dbReference type="ProteomicsDB" id="75866"/>
<dbReference type="Pumba" id="Q969X0"/>
<dbReference type="TopDownProteomics" id="Q969X0"/>
<dbReference type="Antibodypedia" id="31814">
    <property type="antibodies" value="114 antibodies from 24 providers"/>
</dbReference>
<dbReference type="DNASU" id="196383"/>
<dbReference type="Ensembl" id="ENST00000280571.10">
    <property type="protein sequence ID" value="ENSP00000280571.8"/>
    <property type="gene ID" value="ENSG00000150977.12"/>
</dbReference>
<dbReference type="GeneID" id="196383"/>
<dbReference type="KEGG" id="hsa:196383"/>
<dbReference type="MANE-Select" id="ENST00000280571.10">
    <property type="protein sequence ID" value="ENSP00000280571.8"/>
    <property type="RefSeq nucleotide sequence ID" value="NM_145058.3"/>
    <property type="RefSeq protein sequence ID" value="NP_659495.1"/>
</dbReference>
<dbReference type="UCSC" id="uc001uey.2">
    <property type="organism name" value="human"/>
</dbReference>
<dbReference type="AGR" id="HGNC:28787"/>
<dbReference type="CTD" id="196383"/>
<dbReference type="DisGeNET" id="196383"/>
<dbReference type="GeneCards" id="RILPL2"/>
<dbReference type="HGNC" id="HGNC:28787">
    <property type="gene designation" value="RILPL2"/>
</dbReference>
<dbReference type="HPA" id="ENSG00000150977">
    <property type="expression patterns" value="Tissue enhanced (bone)"/>
</dbReference>
<dbReference type="MIM" id="614093">
    <property type="type" value="gene"/>
</dbReference>
<dbReference type="neXtProt" id="NX_Q969X0"/>
<dbReference type="OpenTargets" id="ENSG00000150977"/>
<dbReference type="PharmGKB" id="PA162401325"/>
<dbReference type="VEuPathDB" id="HostDB:ENSG00000150977"/>
<dbReference type="eggNOG" id="ENOG502S08B">
    <property type="taxonomic scope" value="Eukaryota"/>
</dbReference>
<dbReference type="GeneTree" id="ENSGT00940000160182"/>
<dbReference type="HOGENOM" id="CLU_096533_1_0_1"/>
<dbReference type="InParanoid" id="Q969X0"/>
<dbReference type="OMA" id="FPREKEN"/>
<dbReference type="OrthoDB" id="10069524at2759"/>
<dbReference type="PAN-GO" id="Q969X0">
    <property type="GO annotations" value="3 GO annotations based on evolutionary models"/>
</dbReference>
<dbReference type="PhylomeDB" id="Q969X0"/>
<dbReference type="TreeFam" id="TF313489"/>
<dbReference type="PathwayCommons" id="Q969X0"/>
<dbReference type="SignaLink" id="Q969X0"/>
<dbReference type="BioGRID-ORCS" id="196383">
    <property type="hits" value="32 hits in 1092 CRISPR screens"/>
</dbReference>
<dbReference type="ChiTaRS" id="RILPL2">
    <property type="organism name" value="human"/>
</dbReference>
<dbReference type="GenomeRNAi" id="196383"/>
<dbReference type="Pharos" id="Q969X0">
    <property type="development level" value="Tbio"/>
</dbReference>
<dbReference type="PRO" id="PR:Q969X0"/>
<dbReference type="Proteomes" id="UP000005640">
    <property type="component" value="Chromosome 12"/>
</dbReference>
<dbReference type="RNAct" id="Q969X0">
    <property type="molecule type" value="protein"/>
</dbReference>
<dbReference type="Bgee" id="ENSG00000150977">
    <property type="expression patterns" value="Expressed in parotid gland and 197 other cell types or tissues"/>
</dbReference>
<dbReference type="GO" id="GO:0005813">
    <property type="term" value="C:centrosome"/>
    <property type="evidence" value="ECO:0000250"/>
    <property type="project" value="UniProtKB"/>
</dbReference>
<dbReference type="GO" id="GO:0036064">
    <property type="term" value="C:ciliary basal body"/>
    <property type="evidence" value="ECO:0000318"/>
    <property type="project" value="GO_Central"/>
</dbReference>
<dbReference type="GO" id="GO:0005929">
    <property type="term" value="C:cilium"/>
    <property type="evidence" value="ECO:0000314"/>
    <property type="project" value="HPA"/>
</dbReference>
<dbReference type="GO" id="GO:0005737">
    <property type="term" value="C:cytoplasm"/>
    <property type="evidence" value="ECO:0000318"/>
    <property type="project" value="GO_Central"/>
</dbReference>
<dbReference type="GO" id="GO:0005829">
    <property type="term" value="C:cytosol"/>
    <property type="evidence" value="ECO:0000314"/>
    <property type="project" value="HPA"/>
</dbReference>
<dbReference type="GO" id="GO:0043231">
    <property type="term" value="C:intracellular membrane-bounded organelle"/>
    <property type="evidence" value="ECO:0000314"/>
    <property type="project" value="HPA"/>
</dbReference>
<dbReference type="GO" id="GO:0016020">
    <property type="term" value="C:membrane"/>
    <property type="evidence" value="ECO:0007669"/>
    <property type="project" value="GOC"/>
</dbReference>
<dbReference type="GO" id="GO:0051959">
    <property type="term" value="F:dynein light intermediate chain binding"/>
    <property type="evidence" value="ECO:0000318"/>
    <property type="project" value="GO_Central"/>
</dbReference>
<dbReference type="GO" id="GO:0042802">
    <property type="term" value="F:identical protein binding"/>
    <property type="evidence" value="ECO:0000353"/>
    <property type="project" value="IntAct"/>
</dbReference>
<dbReference type="GO" id="GO:0046983">
    <property type="term" value="F:protein dimerization activity"/>
    <property type="evidence" value="ECO:0007669"/>
    <property type="project" value="InterPro"/>
</dbReference>
<dbReference type="GO" id="GO:0031267">
    <property type="term" value="F:small GTPase binding"/>
    <property type="evidence" value="ECO:0000318"/>
    <property type="project" value="GO_Central"/>
</dbReference>
<dbReference type="GO" id="GO:0060271">
    <property type="term" value="P:cilium assembly"/>
    <property type="evidence" value="ECO:0000318"/>
    <property type="project" value="GO_Central"/>
</dbReference>
<dbReference type="GO" id="GO:0003382">
    <property type="term" value="P:epithelial cell morphogenesis"/>
    <property type="evidence" value="ECO:0000250"/>
    <property type="project" value="UniProtKB"/>
</dbReference>
<dbReference type="GO" id="GO:1903445">
    <property type="term" value="P:protein transport from ciliary membrane to plasma membrane"/>
    <property type="evidence" value="ECO:0000250"/>
    <property type="project" value="UniProtKB"/>
</dbReference>
<dbReference type="CDD" id="cd14445">
    <property type="entry name" value="RILP-like"/>
    <property type="match status" value="1"/>
</dbReference>
<dbReference type="FunFam" id="1.20.58.1770:FF:000003">
    <property type="entry name" value="RILP-like protein 2 isoform X1"/>
    <property type="match status" value="1"/>
</dbReference>
<dbReference type="Gene3D" id="1.20.58.1770">
    <property type="match status" value="1"/>
</dbReference>
<dbReference type="Gene3D" id="6.10.230.10">
    <property type="match status" value="1"/>
</dbReference>
<dbReference type="InterPro" id="IPR051241">
    <property type="entry name" value="DZIP_RILPL"/>
</dbReference>
<dbReference type="InterPro" id="IPR034743">
    <property type="entry name" value="RH1"/>
</dbReference>
<dbReference type="InterPro" id="IPR034744">
    <property type="entry name" value="RH2"/>
</dbReference>
<dbReference type="InterPro" id="IPR021563">
    <property type="entry name" value="RILP_dimer"/>
</dbReference>
<dbReference type="PANTHER" id="PTHR21502:SF2">
    <property type="entry name" value="RILP-LIKE PROTEIN 2"/>
    <property type="match status" value="1"/>
</dbReference>
<dbReference type="PANTHER" id="PTHR21502">
    <property type="entry name" value="ZINC FINGER PROTEIN DZIP1"/>
    <property type="match status" value="1"/>
</dbReference>
<dbReference type="Pfam" id="PF09744">
    <property type="entry name" value="RH1"/>
    <property type="match status" value="1"/>
</dbReference>
<dbReference type="Pfam" id="PF11461">
    <property type="entry name" value="RILP"/>
    <property type="match status" value="1"/>
</dbReference>
<dbReference type="SUPFAM" id="SSF161256">
    <property type="entry name" value="RILP dimerisation region"/>
    <property type="match status" value="1"/>
</dbReference>
<dbReference type="PROSITE" id="PS51776">
    <property type="entry name" value="RH1"/>
    <property type="match status" value="1"/>
</dbReference>
<dbReference type="PROSITE" id="PS51777">
    <property type="entry name" value="RH2"/>
    <property type="match status" value="1"/>
</dbReference>
<gene>
    <name type="primary">RILPL2</name>
    <name type="synonym">RLP2</name>
</gene>
<evidence type="ECO:0000250" key="1"/>
<evidence type="ECO:0000250" key="2">
    <source>
        <dbReference type="UniProtKB" id="Q6AYA0"/>
    </source>
</evidence>
<evidence type="ECO:0000250" key="3">
    <source>
        <dbReference type="UniProtKB" id="Q99LE1"/>
    </source>
</evidence>
<evidence type="ECO:0000255" key="4"/>
<evidence type="ECO:0000255" key="5">
    <source>
        <dbReference type="PROSITE-ProRule" id="PRU01112"/>
    </source>
</evidence>
<evidence type="ECO:0000255" key="6">
    <source>
        <dbReference type="PROSITE-ProRule" id="PRU01113"/>
    </source>
</evidence>
<evidence type="ECO:0000256" key="7">
    <source>
        <dbReference type="SAM" id="MobiDB-lite"/>
    </source>
</evidence>
<evidence type="ECO:0000269" key="8">
    <source>
    </source>
</evidence>
<evidence type="ECO:0000269" key="9">
    <source>
    </source>
</evidence>
<evidence type="ECO:0000305" key="10"/>
<evidence type="ECO:0007744" key="11">
    <source>
    </source>
</evidence>
<evidence type="ECO:0007829" key="12">
    <source>
        <dbReference type="PDB" id="6SQ2"/>
    </source>
</evidence>
<protein>
    <recommendedName>
        <fullName>RILP-like protein 2</fullName>
    </recommendedName>
    <alternativeName>
        <fullName>Rab-interacting lysosomal protein-like 2</fullName>
    </alternativeName>
    <alternativeName>
        <fullName>p40phox-binding protein</fullName>
    </alternativeName>
</protein>
<feature type="chain" id="PRO_0000317005" description="RILP-like protein 2">
    <location>
        <begin position="1"/>
        <end position="211"/>
    </location>
</feature>
<feature type="domain" description="RH1" evidence="5">
    <location>
        <begin position="24"/>
        <end position="106"/>
    </location>
</feature>
<feature type="domain" description="RH2" evidence="6">
    <location>
        <begin position="130"/>
        <end position="201"/>
    </location>
</feature>
<feature type="region of interest" description="Disordered" evidence="7">
    <location>
        <begin position="1"/>
        <end position="32"/>
    </location>
</feature>
<feature type="region of interest" description="Disordered" evidence="7">
    <location>
        <begin position="166"/>
        <end position="190"/>
    </location>
</feature>
<feature type="coiled-coil region" evidence="4">
    <location>
        <begin position="70"/>
        <end position="164"/>
    </location>
</feature>
<feature type="compositionally biased region" description="Acidic residues" evidence="7">
    <location>
        <begin position="8"/>
        <end position="21"/>
    </location>
</feature>
<feature type="modified residue" description="Phosphoserine" evidence="11">
    <location>
        <position position="107"/>
    </location>
</feature>
<feature type="mutagenesis site" description="Loss of interaction with RAB8A, RAB10 and RAB12." evidence="9">
    <original>R</original>
    <variation>E</variation>
    <location>
        <position position="130"/>
    </location>
</feature>
<feature type="mutagenesis site" description="Loss of interaction with RAB8A, RAB10 and RAB12." evidence="9">
    <original>R</original>
    <variation>E</variation>
    <location>
        <position position="132"/>
    </location>
</feature>
<feature type="mutagenesis site" description="Loss of interaction with RAB8A, RAB10 and RAB12." evidence="9">
    <original>K</original>
    <variation>E</variation>
    <location>
        <position position="149"/>
    </location>
</feature>
<feature type="helix" evidence="12">
    <location>
        <begin position="135"/>
        <end position="157"/>
    </location>
</feature>
<accession>Q969X0</accession>
<reference key="1">
    <citation type="submission" date="2002-05" db="EMBL/GenBank/DDBJ databases">
        <title>p40phox binding protein.</title>
        <authorList>
            <person name="Kuribayashi F."/>
            <person name="Ago T."/>
            <person name="Sumimoto H."/>
        </authorList>
    </citation>
    <scope>NUCLEOTIDE SEQUENCE [MRNA]</scope>
</reference>
<reference key="2">
    <citation type="journal article" date="2004" name="Nat. Genet.">
        <title>Complete sequencing and characterization of 21,243 full-length human cDNAs.</title>
        <authorList>
            <person name="Ota T."/>
            <person name="Suzuki Y."/>
            <person name="Nishikawa T."/>
            <person name="Otsuki T."/>
            <person name="Sugiyama T."/>
            <person name="Irie R."/>
            <person name="Wakamatsu A."/>
            <person name="Hayashi K."/>
            <person name="Sato H."/>
            <person name="Nagai K."/>
            <person name="Kimura K."/>
            <person name="Makita H."/>
            <person name="Sekine M."/>
            <person name="Obayashi M."/>
            <person name="Nishi T."/>
            <person name="Shibahara T."/>
            <person name="Tanaka T."/>
            <person name="Ishii S."/>
            <person name="Yamamoto J."/>
            <person name="Saito K."/>
            <person name="Kawai Y."/>
            <person name="Isono Y."/>
            <person name="Nakamura Y."/>
            <person name="Nagahari K."/>
            <person name="Murakami K."/>
            <person name="Yasuda T."/>
            <person name="Iwayanagi T."/>
            <person name="Wagatsuma M."/>
            <person name="Shiratori A."/>
            <person name="Sudo H."/>
            <person name="Hosoiri T."/>
            <person name="Kaku Y."/>
            <person name="Kodaira H."/>
            <person name="Kondo H."/>
            <person name="Sugawara M."/>
            <person name="Takahashi M."/>
            <person name="Kanda K."/>
            <person name="Yokoi T."/>
            <person name="Furuya T."/>
            <person name="Kikkawa E."/>
            <person name="Omura Y."/>
            <person name="Abe K."/>
            <person name="Kamihara K."/>
            <person name="Katsuta N."/>
            <person name="Sato K."/>
            <person name="Tanikawa M."/>
            <person name="Yamazaki M."/>
            <person name="Ninomiya K."/>
            <person name="Ishibashi T."/>
            <person name="Yamashita H."/>
            <person name="Murakawa K."/>
            <person name="Fujimori K."/>
            <person name="Tanai H."/>
            <person name="Kimata M."/>
            <person name="Watanabe M."/>
            <person name="Hiraoka S."/>
            <person name="Chiba Y."/>
            <person name="Ishida S."/>
            <person name="Ono Y."/>
            <person name="Takiguchi S."/>
            <person name="Watanabe S."/>
            <person name="Yosida M."/>
            <person name="Hotuta T."/>
            <person name="Kusano J."/>
            <person name="Kanehori K."/>
            <person name="Takahashi-Fujii A."/>
            <person name="Hara H."/>
            <person name="Tanase T.-O."/>
            <person name="Nomura Y."/>
            <person name="Togiya S."/>
            <person name="Komai F."/>
            <person name="Hara R."/>
            <person name="Takeuchi K."/>
            <person name="Arita M."/>
            <person name="Imose N."/>
            <person name="Musashino K."/>
            <person name="Yuuki H."/>
            <person name="Oshima A."/>
            <person name="Sasaki N."/>
            <person name="Aotsuka S."/>
            <person name="Yoshikawa Y."/>
            <person name="Matsunawa H."/>
            <person name="Ichihara T."/>
            <person name="Shiohata N."/>
            <person name="Sano S."/>
            <person name="Moriya S."/>
            <person name="Momiyama H."/>
            <person name="Satoh N."/>
            <person name="Takami S."/>
            <person name="Terashima Y."/>
            <person name="Suzuki O."/>
            <person name="Nakagawa S."/>
            <person name="Senoh A."/>
            <person name="Mizoguchi H."/>
            <person name="Goto Y."/>
            <person name="Shimizu F."/>
            <person name="Wakebe H."/>
            <person name="Hishigaki H."/>
            <person name="Watanabe T."/>
            <person name="Sugiyama A."/>
            <person name="Takemoto M."/>
            <person name="Kawakami B."/>
            <person name="Yamazaki M."/>
            <person name="Watanabe K."/>
            <person name="Kumagai A."/>
            <person name="Itakura S."/>
            <person name="Fukuzumi Y."/>
            <person name="Fujimori Y."/>
            <person name="Komiyama M."/>
            <person name="Tashiro H."/>
            <person name="Tanigami A."/>
            <person name="Fujiwara T."/>
            <person name="Ono T."/>
            <person name="Yamada K."/>
            <person name="Fujii Y."/>
            <person name="Ozaki K."/>
            <person name="Hirao M."/>
            <person name="Ohmori Y."/>
            <person name="Kawabata A."/>
            <person name="Hikiji T."/>
            <person name="Kobatake N."/>
            <person name="Inagaki H."/>
            <person name="Ikema Y."/>
            <person name="Okamoto S."/>
            <person name="Okitani R."/>
            <person name="Kawakami T."/>
            <person name="Noguchi S."/>
            <person name="Itoh T."/>
            <person name="Shigeta K."/>
            <person name="Senba T."/>
            <person name="Matsumura K."/>
            <person name="Nakajima Y."/>
            <person name="Mizuno T."/>
            <person name="Morinaga M."/>
            <person name="Sasaki M."/>
            <person name="Togashi T."/>
            <person name="Oyama M."/>
            <person name="Hata H."/>
            <person name="Watanabe M."/>
            <person name="Komatsu T."/>
            <person name="Mizushima-Sugano J."/>
            <person name="Satoh T."/>
            <person name="Shirai Y."/>
            <person name="Takahashi Y."/>
            <person name="Nakagawa K."/>
            <person name="Okumura K."/>
            <person name="Nagase T."/>
            <person name="Nomura N."/>
            <person name="Kikuchi H."/>
            <person name="Masuho Y."/>
            <person name="Yamashita R."/>
            <person name="Nakai K."/>
            <person name="Yada T."/>
            <person name="Nakamura Y."/>
            <person name="Ohara O."/>
            <person name="Isogai T."/>
            <person name="Sugano S."/>
        </authorList>
    </citation>
    <scope>NUCLEOTIDE SEQUENCE [LARGE SCALE MRNA]</scope>
    <source>
        <tissue>Salivary gland</tissue>
    </source>
</reference>
<reference key="3">
    <citation type="submission" date="2005-07" db="EMBL/GenBank/DDBJ databases">
        <authorList>
            <person name="Mural R.J."/>
            <person name="Istrail S."/>
            <person name="Sutton G.G."/>
            <person name="Florea L."/>
            <person name="Halpern A.L."/>
            <person name="Mobarry C.M."/>
            <person name="Lippert R."/>
            <person name="Walenz B."/>
            <person name="Shatkay H."/>
            <person name="Dew I."/>
            <person name="Miller J.R."/>
            <person name="Flanigan M.J."/>
            <person name="Edwards N.J."/>
            <person name="Bolanos R."/>
            <person name="Fasulo D."/>
            <person name="Halldorsson B.V."/>
            <person name="Hannenhalli S."/>
            <person name="Turner R."/>
            <person name="Yooseph S."/>
            <person name="Lu F."/>
            <person name="Nusskern D.R."/>
            <person name="Shue B.C."/>
            <person name="Zheng X.H."/>
            <person name="Zhong F."/>
            <person name="Delcher A.L."/>
            <person name="Huson D.H."/>
            <person name="Kravitz S.A."/>
            <person name="Mouchard L."/>
            <person name="Reinert K."/>
            <person name="Remington K.A."/>
            <person name="Clark A.G."/>
            <person name="Waterman M.S."/>
            <person name="Eichler E.E."/>
            <person name="Adams M.D."/>
            <person name="Hunkapiller M.W."/>
            <person name="Myers E.W."/>
            <person name="Venter J.C."/>
        </authorList>
    </citation>
    <scope>NUCLEOTIDE SEQUENCE [LARGE SCALE GENOMIC DNA]</scope>
</reference>
<reference key="4">
    <citation type="journal article" date="2004" name="Genome Res.">
        <title>The status, quality, and expansion of the NIH full-length cDNA project: the Mammalian Gene Collection (MGC).</title>
        <authorList>
            <consortium name="The MGC Project Team"/>
        </authorList>
    </citation>
    <scope>NUCLEOTIDE SEQUENCE [LARGE SCALE MRNA]</scope>
    <source>
        <tissue>Kidney</tissue>
    </source>
</reference>
<reference key="5">
    <citation type="journal article" date="2004" name="Mol. Biol. Cell">
        <title>A unique region of RILP distinguishes it from its related proteins in its regulation of lysosomal morphology and interaction with Rab7 and Rab34.</title>
        <authorList>
            <person name="Wang T."/>
            <person name="Wong K.K."/>
            <person name="Hong W."/>
        </authorList>
    </citation>
    <scope>LACK OF FUNCTION</scope>
    <scope>SUBCELLULAR LOCATION</scope>
    <scope>TISSUE SPECIFICITY</scope>
</reference>
<reference key="6">
    <citation type="journal article" date="2013" name="J. Proteome Res.">
        <title>Toward a comprehensive characterization of a human cancer cell phosphoproteome.</title>
        <authorList>
            <person name="Zhou H."/>
            <person name="Di Palma S."/>
            <person name="Preisinger C."/>
            <person name="Peng M."/>
            <person name="Polat A.N."/>
            <person name="Heck A.J."/>
            <person name="Mohammed S."/>
        </authorList>
    </citation>
    <scope>PHOSPHORYLATION [LARGE SCALE ANALYSIS] AT SER-107</scope>
    <scope>IDENTIFICATION BY MASS SPECTROMETRY [LARGE SCALE ANALYSIS]</scope>
    <source>
        <tissue>Erythroleukemia</tissue>
    </source>
</reference>
<reference key="7">
    <citation type="journal article" date="2017" name="Elife">
        <title>Systematic proteomic analysis of LRRK2-mediated Rab GTPase phosphorylation establishes a connection to ciliogenesis.</title>
        <authorList>
            <person name="Steger M."/>
            <person name="Diez F."/>
            <person name="Dhekne H.S."/>
            <person name="Lis P."/>
            <person name="Nirujogi R.S."/>
            <person name="Karayel O."/>
            <person name="Tonelli F."/>
            <person name="Martinez T.N."/>
            <person name="Lorentzen E."/>
            <person name="Pfeffer S.R."/>
            <person name="Alessi D.R."/>
            <person name="Mann M."/>
        </authorList>
    </citation>
    <scope>INTERACTION WITH RAB8A; RAB10 AND RAB12</scope>
    <scope>MUTAGENESIS OF ARG-130; ARG-132 AND LYS-149</scope>
</reference>
<keyword id="KW-0002">3D-structure</keyword>
<keyword id="KW-0966">Cell projection</keyword>
<keyword id="KW-0969">Cilium</keyword>
<keyword id="KW-0175">Coiled coil</keyword>
<keyword id="KW-0963">Cytoplasm</keyword>
<keyword id="KW-0206">Cytoskeleton</keyword>
<keyword id="KW-0597">Phosphoprotein</keyword>
<keyword id="KW-0653">Protein transport</keyword>
<keyword id="KW-1267">Proteomics identification</keyword>
<keyword id="KW-1185">Reference proteome</keyword>
<keyword id="KW-0813">Transport</keyword>
<comment type="function">
    <text evidence="2 3">Involved in cell shape and neuronal morphogenesis, positively regulating the establishment and maintenance of dendritic spines (By similarity). Plays a role in cellular protein transport, including protein transport away from primary cilia (By similarity). May function via activation of RAC1 and PAK1 (By similarity).</text>
</comment>
<comment type="subunit">
    <text evidence="2 3 9">Homodimer (By similarity). Interacts with RAC1 (By similarity). Interacts (via N-terminus) with MYO5A, the interaction is required for its role in dendrite formation (By similarity). Interacts with RAB8A; interaction is dependent on the phosphorylation of RAB8A on 'Thr-72' (PubMed:29125462). Interacts with RAB10 and RAB12; interaction is dependent on the phosphorylation of 'Thr-73' on RAB10 and 'Ser-105' on RAB12 (PubMed:29125462).</text>
</comment>
<comment type="interaction">
    <interactant intactId="EBI-717552">
        <id>Q969X0</id>
    </interactant>
    <interactant intactId="EBI-726075">
        <id>P61026</id>
        <label>RAB10</label>
    </interactant>
    <organismsDiffer>false</organismsDiffer>
    <experiments>2</experiments>
</comment>
<comment type="interaction">
    <interactant intactId="EBI-717552">
        <id>Q969X0</id>
    </interactant>
    <interactant intactId="EBI-722293">
        <id>P61006</id>
        <label>RAB8A</label>
    </interactant>
    <organismsDiffer>false</organismsDiffer>
    <experiments>8</experiments>
</comment>
<comment type="interaction">
    <interactant intactId="EBI-717552">
        <id>Q969X0</id>
    </interactant>
    <interactant intactId="EBI-717552">
        <id>Q969X0</id>
        <label>RILPL2</label>
    </interactant>
    <organismsDiffer>false</organismsDiffer>
    <experiments>3</experiments>
</comment>
<comment type="subcellular location">
    <subcellularLocation>
        <location evidence="8">Cytoplasm</location>
        <location evidence="8">Cytosol</location>
    </subcellularLocation>
    <subcellularLocation>
        <location evidence="1">Cytoplasm</location>
        <location evidence="1">Cytoskeleton</location>
        <location evidence="1">Microtubule organizing center</location>
        <location evidence="1">Centrosome</location>
    </subcellularLocation>
    <subcellularLocation>
        <location evidence="1">Cell projection</location>
        <location evidence="1">Cilium</location>
    </subcellularLocation>
</comment>
<comment type="tissue specificity">
    <text evidence="8">Widely expressed. Expressed at higher level in lung.</text>
</comment>
<comment type="similarity">
    <text evidence="10">Belongs to the RILPL family.</text>
</comment>
<proteinExistence type="evidence at protein level"/>
<name>RIPL2_HUMAN</name>